<proteinExistence type="inferred from homology"/>
<organism>
    <name type="scientific">Salmonella arizonae (strain ATCC BAA-731 / CDC346-86 / RSK2980)</name>
    <dbReference type="NCBI Taxonomy" id="41514"/>
    <lineage>
        <taxon>Bacteria</taxon>
        <taxon>Pseudomonadati</taxon>
        <taxon>Pseudomonadota</taxon>
        <taxon>Gammaproteobacteria</taxon>
        <taxon>Enterobacterales</taxon>
        <taxon>Enterobacteriaceae</taxon>
        <taxon>Salmonella</taxon>
    </lineage>
</organism>
<comment type="function">
    <text evidence="1">Pore-forming subunit of a potassium efflux system that confers protection against electrophiles. Catalyzes K(+)/H(+) antiport.</text>
</comment>
<comment type="subunit">
    <text evidence="1">Homodimer. Interacts with the regulatory subunit KefF.</text>
</comment>
<comment type="subcellular location">
    <subcellularLocation>
        <location evidence="1">Cell inner membrane</location>
        <topology evidence="1">Multi-pass membrane protein</topology>
    </subcellularLocation>
</comment>
<comment type="similarity">
    <text evidence="1">Belongs to the monovalent cation:proton antiporter 2 (CPA2) transporter (TC 2.A.37) family. KefC subfamily.</text>
</comment>
<reference key="1">
    <citation type="submission" date="2007-11" db="EMBL/GenBank/DDBJ databases">
        <authorList>
            <consortium name="The Salmonella enterica serovar Arizonae Genome Sequencing Project"/>
            <person name="McClelland M."/>
            <person name="Sanderson E.K."/>
            <person name="Porwollik S."/>
            <person name="Spieth J."/>
            <person name="Clifton W.S."/>
            <person name="Fulton R."/>
            <person name="Chunyan W."/>
            <person name="Wollam A."/>
            <person name="Shah N."/>
            <person name="Pepin K."/>
            <person name="Bhonagiri V."/>
            <person name="Nash W."/>
            <person name="Johnson M."/>
            <person name="Thiruvilangam P."/>
            <person name="Wilson R."/>
        </authorList>
    </citation>
    <scope>NUCLEOTIDE SEQUENCE [LARGE SCALE GENOMIC DNA]</scope>
    <source>
        <strain>ATCC BAA-731 / CDC346-86 / RSK2980</strain>
    </source>
</reference>
<sequence>MDSHTLMQALIYLGSAALIVPIAVRLGLGSVLGYLIAGCIIGPWGLRLVTDAESILHFAEIGVVLMLFVIGLELDPQRLWKLRASVFGGGALQMVICGGLIGFFCMFLGLRWQVAELIGMTLALSSTAIAMQAMNERNLTVSQVGRSAFAVLLFQDIAAIPLVAMIPLLAASGASTTLGAFALSALKVAGALALVVLLGRYVTRPALRFVARSGLREVFSAVALFLVFGFGLLLEEVGLSMAMGAFLAGVLLASSEYRHALESDIEPFKGLLLGLFFIGVGMSIDFGTLVDNPLRILLLLAGFLAIKIVMLWLIARPLGVPAKQRRWFAVLLGQGSEFAFVVFGAAQMADVLEPEWAKALTLAVALSMAATPIFLVLLTRMEKAATGEAREADEIDEEQPRVIVAGFGRFGQIAGRLLLSSGVKMVVLDHDPDHIETLRKFGMKVFYGDATRMDLLESAGAAKAEVLINAIDDPQTNLQLSELVKTHFPHLQIIARARDVDHYIRLRQAGVAMPERETFESALKSGRQALEALGLGRYEARERADLFRHFNTQMVEEMAKGENDPLSRAAAYKRTSAMLSEIITEDREHLSLIQRHGWQGTAEGKHTGDIADEPQVKPST</sequence>
<evidence type="ECO:0000255" key="1">
    <source>
        <dbReference type="HAMAP-Rule" id="MF_01413"/>
    </source>
</evidence>
<evidence type="ECO:0000255" key="2">
    <source>
        <dbReference type="PROSITE-ProRule" id="PRU00543"/>
    </source>
</evidence>
<evidence type="ECO:0000256" key="3">
    <source>
        <dbReference type="SAM" id="MobiDB-lite"/>
    </source>
</evidence>
<accession>A9MQG6</accession>
<dbReference type="EMBL" id="CP000880">
    <property type="protein sequence ID" value="ABX22764.1"/>
    <property type="molecule type" value="Genomic_DNA"/>
</dbReference>
<dbReference type="SMR" id="A9MQG6"/>
<dbReference type="STRING" id="41514.SARI_02918"/>
<dbReference type="KEGG" id="ses:SARI_02918"/>
<dbReference type="HOGENOM" id="CLU_005126_9_3_6"/>
<dbReference type="Proteomes" id="UP000002084">
    <property type="component" value="Chromosome"/>
</dbReference>
<dbReference type="GO" id="GO:0005886">
    <property type="term" value="C:plasma membrane"/>
    <property type="evidence" value="ECO:0007669"/>
    <property type="project" value="UniProtKB-SubCell"/>
</dbReference>
<dbReference type="GO" id="GO:0019899">
    <property type="term" value="F:enzyme binding"/>
    <property type="evidence" value="ECO:0007669"/>
    <property type="project" value="InterPro"/>
</dbReference>
<dbReference type="GO" id="GO:0015503">
    <property type="term" value="F:glutathione-regulated potassium exporter activity"/>
    <property type="evidence" value="ECO:0007669"/>
    <property type="project" value="UniProtKB-UniRule"/>
</dbReference>
<dbReference type="GO" id="GO:0015643">
    <property type="term" value="F:toxic substance binding"/>
    <property type="evidence" value="ECO:0007669"/>
    <property type="project" value="InterPro"/>
</dbReference>
<dbReference type="GO" id="GO:1902600">
    <property type="term" value="P:proton transmembrane transport"/>
    <property type="evidence" value="ECO:0007669"/>
    <property type="project" value="InterPro"/>
</dbReference>
<dbReference type="GO" id="GO:0051595">
    <property type="term" value="P:response to methylglyoxal"/>
    <property type="evidence" value="ECO:0007669"/>
    <property type="project" value="InterPro"/>
</dbReference>
<dbReference type="FunFam" id="1.20.1530.20:FF:000001">
    <property type="entry name" value="Glutathione-regulated potassium-efflux system protein KefB"/>
    <property type="match status" value="1"/>
</dbReference>
<dbReference type="FunFam" id="3.40.50.720:FF:000036">
    <property type="entry name" value="Glutathione-regulated potassium-efflux system protein KefB"/>
    <property type="match status" value="1"/>
</dbReference>
<dbReference type="Gene3D" id="1.20.1530.20">
    <property type="match status" value="1"/>
</dbReference>
<dbReference type="Gene3D" id="3.40.50.720">
    <property type="entry name" value="NAD(P)-binding Rossmann-like Domain"/>
    <property type="match status" value="1"/>
</dbReference>
<dbReference type="HAMAP" id="MF_01413">
    <property type="entry name" value="K_H_efflux_KefC"/>
    <property type="match status" value="1"/>
</dbReference>
<dbReference type="InterPro" id="IPR006153">
    <property type="entry name" value="Cation/H_exchanger_TM"/>
</dbReference>
<dbReference type="InterPro" id="IPR004771">
    <property type="entry name" value="K/H_exchanger"/>
</dbReference>
<dbReference type="InterPro" id="IPR023941">
    <property type="entry name" value="K_H_efflux_KefC"/>
</dbReference>
<dbReference type="InterPro" id="IPR006036">
    <property type="entry name" value="K_uptake_TrkA"/>
</dbReference>
<dbReference type="InterPro" id="IPR038770">
    <property type="entry name" value="Na+/solute_symporter_sf"/>
</dbReference>
<dbReference type="InterPro" id="IPR036291">
    <property type="entry name" value="NAD(P)-bd_dom_sf"/>
</dbReference>
<dbReference type="InterPro" id="IPR003148">
    <property type="entry name" value="RCK_N"/>
</dbReference>
<dbReference type="NCBIfam" id="TIGR00932">
    <property type="entry name" value="2a37"/>
    <property type="match status" value="1"/>
</dbReference>
<dbReference type="NCBIfam" id="NF002924">
    <property type="entry name" value="PRK03562.1"/>
    <property type="match status" value="1"/>
</dbReference>
<dbReference type="PANTHER" id="PTHR46157:SF3">
    <property type="entry name" value="GLUTATHIONE-REGULATED POTASSIUM-EFFLUX SYSTEM PROTEIN KEFC"/>
    <property type="match status" value="1"/>
</dbReference>
<dbReference type="PANTHER" id="PTHR46157">
    <property type="entry name" value="K(+) EFFLUX ANTIPORTER 3, CHLOROPLASTIC"/>
    <property type="match status" value="1"/>
</dbReference>
<dbReference type="Pfam" id="PF00999">
    <property type="entry name" value="Na_H_Exchanger"/>
    <property type="match status" value="1"/>
</dbReference>
<dbReference type="Pfam" id="PF02254">
    <property type="entry name" value="TrkA_N"/>
    <property type="match status" value="1"/>
</dbReference>
<dbReference type="PRINTS" id="PR00335">
    <property type="entry name" value="KUPTAKETRKA"/>
</dbReference>
<dbReference type="SUPFAM" id="SSF51735">
    <property type="entry name" value="NAD(P)-binding Rossmann-fold domains"/>
    <property type="match status" value="1"/>
</dbReference>
<dbReference type="PROSITE" id="PS51201">
    <property type="entry name" value="RCK_N"/>
    <property type="match status" value="1"/>
</dbReference>
<feature type="chain" id="PRO_1000087394" description="Glutathione-regulated potassium-efflux system protein KefC">
    <location>
        <begin position="1"/>
        <end position="620"/>
    </location>
</feature>
<feature type="transmembrane region" description="Helical" evidence="1">
    <location>
        <begin position="4"/>
        <end position="24"/>
    </location>
</feature>
<feature type="transmembrane region" description="Helical" evidence="1">
    <location>
        <begin position="26"/>
        <end position="46"/>
    </location>
</feature>
<feature type="transmembrane region" description="Helical" evidence="1">
    <location>
        <begin position="54"/>
        <end position="74"/>
    </location>
</feature>
<feature type="transmembrane region" description="Helical" evidence="1">
    <location>
        <begin position="90"/>
        <end position="110"/>
    </location>
</feature>
<feature type="transmembrane region" description="Helical" evidence="1">
    <location>
        <begin position="114"/>
        <end position="134"/>
    </location>
</feature>
<feature type="transmembrane region" description="Helical" evidence="1">
    <location>
        <begin position="149"/>
        <end position="169"/>
    </location>
</feature>
<feature type="transmembrane region" description="Helical" evidence="1">
    <location>
        <begin position="178"/>
        <end position="198"/>
    </location>
</feature>
<feature type="transmembrane region" description="Helical" evidence="1">
    <location>
        <begin position="218"/>
        <end position="238"/>
    </location>
</feature>
<feature type="transmembrane region" description="Helical" evidence="1">
    <location>
        <begin position="270"/>
        <end position="290"/>
    </location>
</feature>
<feature type="transmembrane region" description="Helical" evidence="1">
    <location>
        <begin position="294"/>
        <end position="314"/>
    </location>
</feature>
<feature type="transmembrane region" description="Helical" evidence="1">
    <location>
        <begin position="327"/>
        <end position="347"/>
    </location>
</feature>
<feature type="transmembrane region" description="Helical" evidence="1">
    <location>
        <begin position="359"/>
        <end position="379"/>
    </location>
</feature>
<feature type="domain" description="RCK N-terminal" evidence="2">
    <location>
        <begin position="399"/>
        <end position="518"/>
    </location>
</feature>
<feature type="region of interest" description="Disordered" evidence="3">
    <location>
        <begin position="599"/>
        <end position="620"/>
    </location>
</feature>
<name>KEFC_SALAR</name>
<protein>
    <recommendedName>
        <fullName evidence="1">Glutathione-regulated potassium-efflux system protein KefC</fullName>
    </recommendedName>
    <alternativeName>
        <fullName evidence="1">K(+)/H(+) antiporter</fullName>
    </alternativeName>
</protein>
<gene>
    <name evidence="1" type="primary">kefC</name>
    <name type="ordered locus">SARI_02918</name>
</gene>
<keyword id="KW-0050">Antiport</keyword>
<keyword id="KW-0997">Cell inner membrane</keyword>
<keyword id="KW-1003">Cell membrane</keyword>
<keyword id="KW-0406">Ion transport</keyword>
<keyword id="KW-0472">Membrane</keyword>
<keyword id="KW-0630">Potassium</keyword>
<keyword id="KW-0633">Potassium transport</keyword>
<keyword id="KW-1185">Reference proteome</keyword>
<keyword id="KW-0812">Transmembrane</keyword>
<keyword id="KW-1133">Transmembrane helix</keyword>
<keyword id="KW-0813">Transport</keyword>